<comment type="function">
    <text evidence="1">Catalyzes the isomerization between 2-isopropylmalate and 3-isopropylmalate, via the formation of 2-isopropylmaleate.</text>
</comment>
<comment type="catalytic activity">
    <reaction evidence="1">
        <text>(2R,3S)-3-isopropylmalate = (2S)-2-isopropylmalate</text>
        <dbReference type="Rhea" id="RHEA:32287"/>
        <dbReference type="ChEBI" id="CHEBI:1178"/>
        <dbReference type="ChEBI" id="CHEBI:35121"/>
        <dbReference type="EC" id="4.2.1.33"/>
    </reaction>
</comment>
<comment type="cofactor">
    <cofactor evidence="1">
        <name>[4Fe-4S] cluster</name>
        <dbReference type="ChEBI" id="CHEBI:49883"/>
    </cofactor>
    <text evidence="1">Binds 1 [4Fe-4S] cluster per subunit.</text>
</comment>
<comment type="pathway">
    <text evidence="1">Amino-acid biosynthesis; L-leucine biosynthesis; L-leucine from 3-methyl-2-oxobutanoate: step 2/4.</text>
</comment>
<comment type="subunit">
    <text evidence="1">Heterodimer of LeuC and LeuD.</text>
</comment>
<comment type="similarity">
    <text evidence="1">Belongs to the aconitase/IPM isomerase family. LeuC type 1 subfamily.</text>
</comment>
<gene>
    <name evidence="1" type="primary">leuC</name>
    <name type="ordered locus">BAB1_1905</name>
</gene>
<proteinExistence type="inferred from homology"/>
<keyword id="KW-0004">4Fe-4S</keyword>
<keyword id="KW-0028">Amino-acid biosynthesis</keyword>
<keyword id="KW-0100">Branched-chain amino acid biosynthesis</keyword>
<keyword id="KW-0408">Iron</keyword>
<keyword id="KW-0411">Iron-sulfur</keyword>
<keyword id="KW-0432">Leucine biosynthesis</keyword>
<keyword id="KW-0456">Lyase</keyword>
<keyword id="KW-0479">Metal-binding</keyword>
<keyword id="KW-1185">Reference proteome</keyword>
<organism>
    <name type="scientific">Brucella abortus (strain 2308)</name>
    <dbReference type="NCBI Taxonomy" id="359391"/>
    <lineage>
        <taxon>Bacteria</taxon>
        <taxon>Pseudomonadati</taxon>
        <taxon>Pseudomonadota</taxon>
        <taxon>Alphaproteobacteria</taxon>
        <taxon>Hyphomicrobiales</taxon>
        <taxon>Brucellaceae</taxon>
        <taxon>Brucella/Ochrobactrum group</taxon>
        <taxon>Brucella</taxon>
    </lineage>
</organism>
<evidence type="ECO:0000255" key="1">
    <source>
        <dbReference type="HAMAP-Rule" id="MF_01026"/>
    </source>
</evidence>
<sequence>MSAPRTLYDKIWDDHVVDQQEDGTCLLYIDRHLVHEVTSPQAFEGLRMAGRPVRHPEKTLAVVDHNVPTSPDRINGIQNEESRIQVEALARNAADFGVEYYSERDKRQGIVHIVGPEQGFTLPGMTIVCGDSHTSTHGAFGALAHGIGTSEVEHVLATQTLIQKKAKNMLVRVDGKLPAGVTAKDIVLAIIGEIGTAGGTGYVIEYAGEAIRSLSMEGRMTICNMSIEGGARAGLIAPDETTFEYIKGRPRAPQGETLEQAINYWKTLHSDEGAHFDKIVTLDAGSLPPIVSWGSSPEDVVSVTGVVPNPDDIADETKRASKWRALDYMGLKPGTKITDIAVDRVFIGSCTNGRIEDLRAAAKVVEGKKVAPTVNAMIVPGSGLVKEQAEAEGLHKIFIEAGFDWREPGCSMCLAMNDDRLKPGERCASTSNRNFEGRQGFKGRTHLVSPAMAAAAAIAGHFVDIRAWK</sequence>
<name>LEUC_BRUA2</name>
<feature type="chain" id="PRO_1000063530" description="3-isopropylmalate dehydratase large subunit">
    <location>
        <begin position="1"/>
        <end position="469"/>
    </location>
</feature>
<feature type="binding site" evidence="1">
    <location>
        <position position="350"/>
    </location>
    <ligand>
        <name>[4Fe-4S] cluster</name>
        <dbReference type="ChEBI" id="CHEBI:49883"/>
    </ligand>
</feature>
<feature type="binding site" evidence="1">
    <location>
        <position position="410"/>
    </location>
    <ligand>
        <name>[4Fe-4S] cluster</name>
        <dbReference type="ChEBI" id="CHEBI:49883"/>
    </ligand>
</feature>
<feature type="binding site" evidence="1">
    <location>
        <position position="413"/>
    </location>
    <ligand>
        <name>[4Fe-4S] cluster</name>
        <dbReference type="ChEBI" id="CHEBI:49883"/>
    </ligand>
</feature>
<dbReference type="EC" id="4.2.1.33" evidence="1"/>
<dbReference type="EMBL" id="AM040264">
    <property type="protein sequence ID" value="CAJ11861.1"/>
    <property type="molecule type" value="Genomic_DNA"/>
</dbReference>
<dbReference type="RefSeq" id="WP_002964974.1">
    <property type="nucleotide sequence ID" value="NZ_KN046823.1"/>
</dbReference>
<dbReference type="SMR" id="Q2YLP7"/>
<dbReference type="STRING" id="359391.BAB1_1905"/>
<dbReference type="GeneID" id="93017762"/>
<dbReference type="KEGG" id="bmf:BAB1_1905"/>
<dbReference type="PATRIC" id="fig|359391.11.peg.1145"/>
<dbReference type="HOGENOM" id="CLU_006714_3_4_5"/>
<dbReference type="UniPathway" id="UPA00048">
    <property type="reaction ID" value="UER00071"/>
</dbReference>
<dbReference type="PRO" id="PR:Q2YLP7"/>
<dbReference type="Proteomes" id="UP000002719">
    <property type="component" value="Chromosome I"/>
</dbReference>
<dbReference type="GO" id="GO:0003861">
    <property type="term" value="F:3-isopropylmalate dehydratase activity"/>
    <property type="evidence" value="ECO:0007669"/>
    <property type="project" value="UniProtKB-UniRule"/>
</dbReference>
<dbReference type="GO" id="GO:0051539">
    <property type="term" value="F:4 iron, 4 sulfur cluster binding"/>
    <property type="evidence" value="ECO:0007669"/>
    <property type="project" value="UniProtKB-KW"/>
</dbReference>
<dbReference type="GO" id="GO:0046872">
    <property type="term" value="F:metal ion binding"/>
    <property type="evidence" value="ECO:0007669"/>
    <property type="project" value="UniProtKB-KW"/>
</dbReference>
<dbReference type="GO" id="GO:0009098">
    <property type="term" value="P:L-leucine biosynthetic process"/>
    <property type="evidence" value="ECO:0007669"/>
    <property type="project" value="UniProtKB-UniRule"/>
</dbReference>
<dbReference type="CDD" id="cd01583">
    <property type="entry name" value="IPMI"/>
    <property type="match status" value="1"/>
</dbReference>
<dbReference type="FunFam" id="3.30.499.10:FF:000006">
    <property type="entry name" value="3-isopropylmalate dehydratase large subunit"/>
    <property type="match status" value="1"/>
</dbReference>
<dbReference type="FunFam" id="3.30.499.10:FF:000007">
    <property type="entry name" value="3-isopropylmalate dehydratase large subunit"/>
    <property type="match status" value="1"/>
</dbReference>
<dbReference type="Gene3D" id="3.30.499.10">
    <property type="entry name" value="Aconitase, domain 3"/>
    <property type="match status" value="2"/>
</dbReference>
<dbReference type="HAMAP" id="MF_01026">
    <property type="entry name" value="LeuC_type1"/>
    <property type="match status" value="1"/>
</dbReference>
<dbReference type="InterPro" id="IPR004430">
    <property type="entry name" value="3-IsopropMal_deHydase_lsu"/>
</dbReference>
<dbReference type="InterPro" id="IPR015931">
    <property type="entry name" value="Acnase/IPM_dHydase_lsu_aba_1/3"/>
</dbReference>
<dbReference type="InterPro" id="IPR001030">
    <property type="entry name" value="Acoase/IPM_deHydtase_lsu_aba"/>
</dbReference>
<dbReference type="InterPro" id="IPR018136">
    <property type="entry name" value="Aconitase_4Fe-4S_BS"/>
</dbReference>
<dbReference type="InterPro" id="IPR036008">
    <property type="entry name" value="Aconitase_4Fe-4S_dom"/>
</dbReference>
<dbReference type="InterPro" id="IPR050067">
    <property type="entry name" value="IPM_dehydratase_rel_enz"/>
</dbReference>
<dbReference type="InterPro" id="IPR033941">
    <property type="entry name" value="IPMI_cat"/>
</dbReference>
<dbReference type="NCBIfam" id="TIGR00170">
    <property type="entry name" value="leuC"/>
    <property type="match status" value="1"/>
</dbReference>
<dbReference type="NCBIfam" id="NF004016">
    <property type="entry name" value="PRK05478.1"/>
    <property type="match status" value="1"/>
</dbReference>
<dbReference type="NCBIfam" id="NF009116">
    <property type="entry name" value="PRK12466.1"/>
    <property type="match status" value="1"/>
</dbReference>
<dbReference type="PANTHER" id="PTHR43822:SF9">
    <property type="entry name" value="3-ISOPROPYLMALATE DEHYDRATASE"/>
    <property type="match status" value="1"/>
</dbReference>
<dbReference type="PANTHER" id="PTHR43822">
    <property type="entry name" value="HOMOACONITASE, MITOCHONDRIAL-RELATED"/>
    <property type="match status" value="1"/>
</dbReference>
<dbReference type="Pfam" id="PF00330">
    <property type="entry name" value="Aconitase"/>
    <property type="match status" value="1"/>
</dbReference>
<dbReference type="PRINTS" id="PR00415">
    <property type="entry name" value="ACONITASE"/>
</dbReference>
<dbReference type="SUPFAM" id="SSF53732">
    <property type="entry name" value="Aconitase iron-sulfur domain"/>
    <property type="match status" value="1"/>
</dbReference>
<dbReference type="PROSITE" id="PS00450">
    <property type="entry name" value="ACONITASE_1"/>
    <property type="match status" value="1"/>
</dbReference>
<dbReference type="PROSITE" id="PS01244">
    <property type="entry name" value="ACONITASE_2"/>
    <property type="match status" value="1"/>
</dbReference>
<reference key="1">
    <citation type="journal article" date="2005" name="Infect. Immun.">
        <title>Whole-genome analyses of speciation events in pathogenic Brucellae.</title>
        <authorList>
            <person name="Chain P.S."/>
            <person name="Comerci D.J."/>
            <person name="Tolmasky M.E."/>
            <person name="Larimer F.W."/>
            <person name="Malfatti S.A."/>
            <person name="Vergez L.M."/>
            <person name="Aguero F."/>
            <person name="Land M.L."/>
            <person name="Ugalde R.A."/>
            <person name="Garcia E."/>
        </authorList>
    </citation>
    <scope>NUCLEOTIDE SEQUENCE [LARGE SCALE GENOMIC DNA]</scope>
    <source>
        <strain>2308</strain>
    </source>
</reference>
<protein>
    <recommendedName>
        <fullName evidence="1">3-isopropylmalate dehydratase large subunit</fullName>
        <ecNumber evidence="1">4.2.1.33</ecNumber>
    </recommendedName>
    <alternativeName>
        <fullName evidence="1">Alpha-IPM isomerase</fullName>
        <shortName evidence="1">IPMI</shortName>
    </alternativeName>
    <alternativeName>
        <fullName evidence="1">Isopropylmalate isomerase</fullName>
    </alternativeName>
</protein>
<accession>Q2YLP7</accession>